<reference key="1">
    <citation type="journal article" date="2002" name="Mol. Biol. Evol.">
        <title>The plastid chromosome of Atropa belladonna and its comparison with that of Nicotiana tabacum: the role of RNA editing in generating divergence in the process of plant speciation.</title>
        <authorList>
            <person name="Schmitz-Linneweber C."/>
            <person name="Regel R."/>
            <person name="Du T.G."/>
            <person name="Hupfer H."/>
            <person name="Herrmann R.G."/>
            <person name="Maier R.M."/>
        </authorList>
    </citation>
    <scope>NUCLEOTIDE SEQUENCE [LARGE SCALE GENOMIC DNA]</scope>
    <source>
        <strain>cv. Ab5p(kan)</strain>
    </source>
</reference>
<feature type="chain" id="PRO_0000123292" description="Small ribosomal subunit protein uS11c">
    <location>
        <begin position="1"/>
        <end position="138"/>
    </location>
</feature>
<feature type="region of interest" description="Disordered" evidence="2">
    <location>
        <begin position="1"/>
        <end position="22"/>
    </location>
</feature>
<feature type="compositionally biased region" description="Basic residues" evidence="2">
    <location>
        <begin position="9"/>
        <end position="22"/>
    </location>
</feature>
<name>RR11_ATRBE</name>
<sequence length="138" mass="14883">MAKAIPKISSRRNGRIGSRKGARRIPKGVIHVQASFNNTIVTVTDVRGRVVSWSSAGTSGFKGTRRGTPFAAQTAAANAIRTVVDQGMQRAEVMIKGPGLGRDAALRAIRRSGILLTFVRDVTPMPHNGCRPPKKRRV</sequence>
<comment type="subunit">
    <text evidence="1">Part of the 30S ribosomal subunit.</text>
</comment>
<comment type="subcellular location">
    <subcellularLocation>
        <location>Plastid</location>
        <location>Chloroplast</location>
    </subcellularLocation>
</comment>
<comment type="similarity">
    <text evidence="1">Belongs to the universal ribosomal protein uS11 family.</text>
</comment>
<organism>
    <name type="scientific">Atropa belladonna</name>
    <name type="common">Belladonna</name>
    <name type="synonym">Deadly nightshade</name>
    <dbReference type="NCBI Taxonomy" id="33113"/>
    <lineage>
        <taxon>Eukaryota</taxon>
        <taxon>Viridiplantae</taxon>
        <taxon>Streptophyta</taxon>
        <taxon>Embryophyta</taxon>
        <taxon>Tracheophyta</taxon>
        <taxon>Spermatophyta</taxon>
        <taxon>Magnoliopsida</taxon>
        <taxon>eudicotyledons</taxon>
        <taxon>Gunneridae</taxon>
        <taxon>Pentapetalae</taxon>
        <taxon>asterids</taxon>
        <taxon>lamiids</taxon>
        <taxon>Solanales</taxon>
        <taxon>Solanaceae</taxon>
        <taxon>Solanoideae</taxon>
        <taxon>Hyoscyameae</taxon>
        <taxon>Atropa</taxon>
    </lineage>
</organism>
<keyword id="KW-0150">Chloroplast</keyword>
<keyword id="KW-0934">Plastid</keyword>
<keyword id="KW-0687">Ribonucleoprotein</keyword>
<keyword id="KW-0689">Ribosomal protein</keyword>
<keyword id="KW-0694">RNA-binding</keyword>
<keyword id="KW-0699">rRNA-binding</keyword>
<gene>
    <name evidence="1" type="primary">rps11</name>
</gene>
<protein>
    <recommendedName>
        <fullName evidence="1">Small ribosomal subunit protein uS11c</fullName>
    </recommendedName>
    <alternativeName>
        <fullName evidence="3">30S ribosomal protein S11, chloroplastic</fullName>
    </alternativeName>
</protein>
<accession>P69655</accession>
<accession>P06365</accession>
<evidence type="ECO:0000255" key="1">
    <source>
        <dbReference type="HAMAP-Rule" id="MF_01310"/>
    </source>
</evidence>
<evidence type="ECO:0000256" key="2">
    <source>
        <dbReference type="SAM" id="MobiDB-lite"/>
    </source>
</evidence>
<evidence type="ECO:0000305" key="3"/>
<geneLocation type="chloroplast"/>
<dbReference type="EMBL" id="AJ316582">
    <property type="protein sequence ID" value="CAC88077.1"/>
    <property type="molecule type" value="Genomic_DNA"/>
</dbReference>
<dbReference type="RefSeq" id="NP_783264.1">
    <property type="nucleotide sequence ID" value="NC_004561.1"/>
</dbReference>
<dbReference type="SMR" id="P69655"/>
<dbReference type="GeneID" id="806449"/>
<dbReference type="GO" id="GO:0009507">
    <property type="term" value="C:chloroplast"/>
    <property type="evidence" value="ECO:0007669"/>
    <property type="project" value="UniProtKB-SubCell"/>
</dbReference>
<dbReference type="GO" id="GO:1990904">
    <property type="term" value="C:ribonucleoprotein complex"/>
    <property type="evidence" value="ECO:0007669"/>
    <property type="project" value="UniProtKB-KW"/>
</dbReference>
<dbReference type="GO" id="GO:0005840">
    <property type="term" value="C:ribosome"/>
    <property type="evidence" value="ECO:0007669"/>
    <property type="project" value="UniProtKB-KW"/>
</dbReference>
<dbReference type="GO" id="GO:0019843">
    <property type="term" value="F:rRNA binding"/>
    <property type="evidence" value="ECO:0007669"/>
    <property type="project" value="UniProtKB-UniRule"/>
</dbReference>
<dbReference type="GO" id="GO:0003735">
    <property type="term" value="F:structural constituent of ribosome"/>
    <property type="evidence" value="ECO:0007669"/>
    <property type="project" value="InterPro"/>
</dbReference>
<dbReference type="GO" id="GO:0006412">
    <property type="term" value="P:translation"/>
    <property type="evidence" value="ECO:0007669"/>
    <property type="project" value="UniProtKB-UniRule"/>
</dbReference>
<dbReference type="FunFam" id="3.30.420.80:FF:000003">
    <property type="entry name" value="30S ribosomal protein S11, chloroplastic"/>
    <property type="match status" value="1"/>
</dbReference>
<dbReference type="Gene3D" id="3.30.420.80">
    <property type="entry name" value="Ribosomal protein S11"/>
    <property type="match status" value="1"/>
</dbReference>
<dbReference type="HAMAP" id="MF_01310">
    <property type="entry name" value="Ribosomal_uS11"/>
    <property type="match status" value="1"/>
</dbReference>
<dbReference type="InterPro" id="IPR001971">
    <property type="entry name" value="Ribosomal_uS11"/>
</dbReference>
<dbReference type="InterPro" id="IPR019981">
    <property type="entry name" value="Ribosomal_uS11_bac-type"/>
</dbReference>
<dbReference type="InterPro" id="IPR018102">
    <property type="entry name" value="Ribosomal_uS11_CS"/>
</dbReference>
<dbReference type="InterPro" id="IPR036967">
    <property type="entry name" value="Ribosomal_uS11_sf"/>
</dbReference>
<dbReference type="NCBIfam" id="NF003698">
    <property type="entry name" value="PRK05309.1"/>
    <property type="match status" value="1"/>
</dbReference>
<dbReference type="NCBIfam" id="TIGR03632">
    <property type="entry name" value="uS11_bact"/>
    <property type="match status" value="1"/>
</dbReference>
<dbReference type="PANTHER" id="PTHR11759">
    <property type="entry name" value="40S RIBOSOMAL PROTEIN S14/30S RIBOSOMAL PROTEIN S11"/>
    <property type="match status" value="1"/>
</dbReference>
<dbReference type="Pfam" id="PF00411">
    <property type="entry name" value="Ribosomal_S11"/>
    <property type="match status" value="1"/>
</dbReference>
<dbReference type="PIRSF" id="PIRSF002131">
    <property type="entry name" value="Ribosomal_S11"/>
    <property type="match status" value="1"/>
</dbReference>
<dbReference type="SUPFAM" id="SSF53137">
    <property type="entry name" value="Translational machinery components"/>
    <property type="match status" value="1"/>
</dbReference>
<dbReference type="PROSITE" id="PS00054">
    <property type="entry name" value="RIBOSOMAL_S11"/>
    <property type="match status" value="1"/>
</dbReference>
<proteinExistence type="inferred from homology"/>